<proteinExistence type="evidence at protein level"/>
<name>HV601_HUMAN</name>
<reference key="1">
    <citation type="journal article" date="2003" name="Nature">
        <title>The DNA sequence and analysis of human chromosome 14.</title>
        <authorList>
            <person name="Heilig R."/>
            <person name="Eckenberg R."/>
            <person name="Petit J.-L."/>
            <person name="Fonknechten N."/>
            <person name="Da Silva C."/>
            <person name="Cattolico L."/>
            <person name="Levy M."/>
            <person name="Barbe V."/>
            <person name="De Berardinis V."/>
            <person name="Ureta-Vidal A."/>
            <person name="Pelletier E."/>
            <person name="Vico V."/>
            <person name="Anthouard V."/>
            <person name="Rowen L."/>
            <person name="Madan A."/>
            <person name="Qin S."/>
            <person name="Sun H."/>
            <person name="Du H."/>
            <person name="Pepin K."/>
            <person name="Artiguenave F."/>
            <person name="Robert C."/>
            <person name="Cruaud C."/>
            <person name="Bruels T."/>
            <person name="Jaillon O."/>
            <person name="Friedlander L."/>
            <person name="Samson G."/>
            <person name="Brottier P."/>
            <person name="Cure S."/>
            <person name="Segurens B."/>
            <person name="Aniere F."/>
            <person name="Samain S."/>
            <person name="Crespeau H."/>
            <person name="Abbasi N."/>
            <person name="Aiach N."/>
            <person name="Boscus D."/>
            <person name="Dickhoff R."/>
            <person name="Dors M."/>
            <person name="Dubois I."/>
            <person name="Friedman C."/>
            <person name="Gouyvenoux M."/>
            <person name="James R."/>
            <person name="Madan A."/>
            <person name="Mairey-Estrada B."/>
            <person name="Mangenot S."/>
            <person name="Martins N."/>
            <person name="Menard M."/>
            <person name="Oztas S."/>
            <person name="Ratcliffe A."/>
            <person name="Shaffer T."/>
            <person name="Trask B."/>
            <person name="Vacherie B."/>
            <person name="Bellemere C."/>
            <person name="Belser C."/>
            <person name="Besnard-Gonnet M."/>
            <person name="Bartol-Mavel D."/>
            <person name="Boutard M."/>
            <person name="Briez-Silla S."/>
            <person name="Combette S."/>
            <person name="Dufosse-Laurent V."/>
            <person name="Ferron C."/>
            <person name="Lechaplais C."/>
            <person name="Louesse C."/>
            <person name="Muselet D."/>
            <person name="Magdelenat G."/>
            <person name="Pateau E."/>
            <person name="Petit E."/>
            <person name="Sirvain-Trukniewicz P."/>
            <person name="Trybou A."/>
            <person name="Vega-Czarny N."/>
            <person name="Bataille E."/>
            <person name="Bluet E."/>
            <person name="Bordelais I."/>
            <person name="Dubois M."/>
            <person name="Dumont C."/>
            <person name="Guerin T."/>
            <person name="Haffray S."/>
            <person name="Hammadi R."/>
            <person name="Muanga J."/>
            <person name="Pellouin V."/>
            <person name="Robert D."/>
            <person name="Wunderle E."/>
            <person name="Gauguet G."/>
            <person name="Roy A."/>
            <person name="Sainte-Marthe L."/>
            <person name="Verdier J."/>
            <person name="Verdier-Discala C."/>
            <person name="Hillier L.W."/>
            <person name="Fulton L."/>
            <person name="McPherson J."/>
            <person name="Matsuda F."/>
            <person name="Wilson R."/>
            <person name="Scarpelli C."/>
            <person name="Gyapay G."/>
            <person name="Wincker P."/>
            <person name="Saurin W."/>
            <person name="Quetier F."/>
            <person name="Waterston R."/>
            <person name="Hood L."/>
            <person name="Weissenbach J."/>
        </authorList>
    </citation>
    <scope>NUCLEOTIDE SEQUENCE [LARGE SCALE GENOMIC DNA] (IMGT ALLELE IGHV6-1*01)</scope>
</reference>
<reference key="2">
    <citation type="journal article" date="2001" name="Exp. Clin. Immunogenet.">
        <title>Nomenclature of the human immunoglobulin heavy (IGH) genes.</title>
        <authorList>
            <person name="Lefranc M.P."/>
        </authorList>
    </citation>
    <scope>NOMENCLATURE</scope>
</reference>
<reference key="3">
    <citation type="book" date="2001" name="The Immunoglobulin FactsBook.">
        <title>The Immunoglobulin FactsBook.</title>
        <editorList>
            <person name="Lefranc M.P."/>
            <person name="Lefranc G."/>
        </editorList>
        <authorList>
            <person name="Lefranc M.P."/>
            <person name="Lefranc G."/>
        </authorList>
    </citation>
    <scope>NOMENCLATURE</scope>
</reference>
<reference key="4">
    <citation type="journal article" date="2007" name="Annu. Rev. Genet.">
        <title>Immunoglobulin somatic hypermutation.</title>
        <authorList>
            <person name="Teng G."/>
            <person name="Papavasiliou F.N."/>
        </authorList>
    </citation>
    <scope>REVIEW ON SOMATIC HYPERMUTATION</scope>
</reference>
<reference key="5">
    <citation type="journal article" date="2010" name="J. Allergy Clin. Immunol.">
        <title>Structure and function of immunoglobulins.</title>
        <authorList>
            <person name="Schroeder H.W. Jr."/>
            <person name="Cavacini L."/>
        </authorList>
    </citation>
    <scope>REVIEW ON IMMUNOGLOBULINS</scope>
</reference>
<reference key="6">
    <citation type="journal article" date="2012" name="Nat. Rev. Immunol.">
        <title>Molecular programming of B cell memory.</title>
        <authorList>
            <person name="McHeyzer-Williams M."/>
            <person name="Okitsu S."/>
            <person name="Wang N."/>
            <person name="McHeyzer-Williams L."/>
        </authorList>
    </citation>
    <scope>REVIEW ON FUNCTION</scope>
</reference>
<reference key="7">
    <citation type="journal article" date="2014" name="Front. Immunol.">
        <title>Immunoglobulin and T Cell Receptor Genes: IMGT((R)) and the Birth and Rise of Immunoinformatics.</title>
        <authorList>
            <person name="Lefranc M.P."/>
        </authorList>
    </citation>
    <scope>NOMENCLATURE</scope>
</reference>
<keyword id="KW-1064">Adaptive immunity</keyword>
<keyword id="KW-1003">Cell membrane</keyword>
<keyword id="KW-1015">Disulfide bond</keyword>
<keyword id="KW-0391">Immunity</keyword>
<keyword id="KW-1280">Immunoglobulin</keyword>
<keyword id="KW-0393">Immunoglobulin domain</keyword>
<keyword id="KW-0472">Membrane</keyword>
<keyword id="KW-1267">Proteomics identification</keyword>
<keyword id="KW-1185">Reference proteome</keyword>
<keyword id="KW-0964">Secreted</keyword>
<keyword id="KW-0732">Signal</keyword>
<evidence type="ECO:0000250" key="1">
    <source>
        <dbReference type="UniProtKB" id="P23083"/>
    </source>
</evidence>
<evidence type="ECO:0000255" key="2"/>
<evidence type="ECO:0000255" key="3">
    <source>
        <dbReference type="PROSITE-ProRule" id="PRU00114"/>
    </source>
</evidence>
<evidence type="ECO:0000303" key="4">
    <source>
    </source>
</evidence>
<evidence type="ECO:0000303" key="5">
    <source>
    </source>
</evidence>
<evidence type="ECO:0000303" key="6">
    <source>
    </source>
</evidence>
<evidence type="ECO:0000303" key="7">
    <source>
    </source>
</evidence>
<evidence type="ECO:0000303" key="8">
    <source>
    </source>
</evidence>
<evidence type="ECO:0000303" key="9">
    <source ref="3"/>
</evidence>
<evidence type="ECO:0000305" key="10"/>
<sequence length="121" mass="13481">MSVSFLIFLPVLGLPWGVLSQVQLQQSGPGLVKPSQTLSLTCAISGDSVSSNSAAWNWIRQSPSRGLEWLGRTYYRSKWYNDYAVSVKSRITINPDTSKNQFSLQLNSVTPEDTAVYYCAR</sequence>
<gene>
    <name evidence="4 9" type="primary">IGHV6-1</name>
</gene>
<organism>
    <name type="scientific">Homo sapiens</name>
    <name type="common">Human</name>
    <dbReference type="NCBI Taxonomy" id="9606"/>
    <lineage>
        <taxon>Eukaryota</taxon>
        <taxon>Metazoa</taxon>
        <taxon>Chordata</taxon>
        <taxon>Craniata</taxon>
        <taxon>Vertebrata</taxon>
        <taxon>Euteleostomi</taxon>
        <taxon>Mammalia</taxon>
        <taxon>Eutheria</taxon>
        <taxon>Euarchontoglires</taxon>
        <taxon>Primates</taxon>
        <taxon>Haplorrhini</taxon>
        <taxon>Catarrhini</taxon>
        <taxon>Hominidae</taxon>
        <taxon>Homo</taxon>
    </lineage>
</organism>
<protein>
    <recommendedName>
        <fullName evidence="4 9">Immunoglobulin heavy variable 6-1</fullName>
    </recommendedName>
</protein>
<feature type="signal peptide" evidence="2">
    <location>
        <begin position="1"/>
        <end position="20"/>
    </location>
</feature>
<feature type="chain" id="PRO_5007390833" description="Immunoglobulin heavy variable 6-1" evidence="2">
    <location>
        <begin position="21"/>
        <end position="121"/>
    </location>
</feature>
<feature type="domain" description="Ig-like" evidence="3">
    <location>
        <begin position="21"/>
        <end position="121" status="greater than"/>
    </location>
</feature>
<feature type="region of interest" description="Framework-1" evidence="1">
    <location>
        <begin position="21"/>
        <end position="45"/>
    </location>
</feature>
<feature type="region of interest" description="Complementarity-determining-1" evidence="1">
    <location>
        <begin position="46"/>
        <end position="55"/>
    </location>
</feature>
<feature type="region of interest" description="Framework-2" evidence="1">
    <location>
        <begin position="56"/>
        <end position="72"/>
    </location>
</feature>
<feature type="region of interest" description="Complementarity-determining-2" evidence="1">
    <location>
        <begin position="73"/>
        <end position="81"/>
    </location>
</feature>
<feature type="region of interest" description="Framework-3" evidence="1">
    <location>
        <begin position="82"/>
        <end position="119"/>
    </location>
</feature>
<feature type="region of interest" description="Complementarity-determining-3" evidence="1">
    <location>
        <begin position="120"/>
        <end position="121" status="greater than"/>
    </location>
</feature>
<feature type="disulfide bond" evidence="3">
    <location>
        <begin position="42"/>
        <end position="119"/>
    </location>
</feature>
<feature type="non-terminal residue">
    <location>
        <position position="121"/>
    </location>
</feature>
<dbReference type="EMBL" id="AC246787">
    <property type="status" value="NOT_ANNOTATED_CDS"/>
    <property type="molecule type" value="Genomic_DNA"/>
</dbReference>
<dbReference type="SMR" id="A0A0B4J1U7"/>
<dbReference type="FunCoup" id="A0A0B4J1U7">
    <property type="interactions" value="266"/>
</dbReference>
<dbReference type="IMGT_GENE-DB" id="IGHV6-1"/>
<dbReference type="BioMuta" id="IGHV6-1"/>
<dbReference type="MassIVE" id="A0A0B4J1U7"/>
<dbReference type="Ensembl" id="ENST00000390593.2">
    <property type="protein sequence ID" value="ENSP00000375002.2"/>
    <property type="gene ID" value="ENSG00000211933.2"/>
</dbReference>
<dbReference type="Ensembl" id="ENST00000633299.1">
    <property type="protein sequence ID" value="ENSP00000488134.1"/>
    <property type="gene ID" value="ENSG00000282745.1"/>
</dbReference>
<dbReference type="AGR" id="HGNC:5662"/>
<dbReference type="GeneCards" id="IGHV6-1"/>
<dbReference type="HGNC" id="HGNC:5662">
    <property type="gene designation" value="IGHV6-1"/>
</dbReference>
<dbReference type="HPA" id="ENSG00000211933">
    <property type="expression patterns" value="Tissue enriched (intestine)"/>
</dbReference>
<dbReference type="neXtProt" id="NX_A0A0B4J1U7"/>
<dbReference type="OpenTargets" id="ENSG00000211933"/>
<dbReference type="VEuPathDB" id="HostDB:ENSG00000211933"/>
<dbReference type="GeneTree" id="ENSGT01030000234536"/>
<dbReference type="HOGENOM" id="CLU_077975_5_0_1"/>
<dbReference type="InParanoid" id="A0A0B4J1U7"/>
<dbReference type="OMA" id="WLGRTYY"/>
<dbReference type="PAN-GO" id="A0A0B4J1U7">
    <property type="GO annotations" value="11 GO annotations based on evolutionary models"/>
</dbReference>
<dbReference type="PhylomeDB" id="A0A0B4J1U7"/>
<dbReference type="SignaLink" id="A0A0B4J1U7"/>
<dbReference type="Pharos" id="A0A0B4J1U7">
    <property type="development level" value="Tdark"/>
</dbReference>
<dbReference type="PRO" id="PR:A0A0B4J1U7"/>
<dbReference type="Proteomes" id="UP000005640">
    <property type="component" value="Chromosome 14"/>
</dbReference>
<dbReference type="RNAct" id="A0A0B4J1U7">
    <property type="molecule type" value="protein"/>
</dbReference>
<dbReference type="Bgee" id="ENSG00000211933">
    <property type="expression patterns" value="Expressed in rectum and 84 other cell types or tissues"/>
</dbReference>
<dbReference type="GO" id="GO:0005576">
    <property type="term" value="C:extracellular region"/>
    <property type="evidence" value="ECO:0007669"/>
    <property type="project" value="UniProtKB-SubCell"/>
</dbReference>
<dbReference type="GO" id="GO:0019814">
    <property type="term" value="C:immunoglobulin complex"/>
    <property type="evidence" value="ECO:0007669"/>
    <property type="project" value="UniProtKB-KW"/>
</dbReference>
<dbReference type="GO" id="GO:0005886">
    <property type="term" value="C:plasma membrane"/>
    <property type="evidence" value="ECO:0007669"/>
    <property type="project" value="UniProtKB-SubCell"/>
</dbReference>
<dbReference type="GO" id="GO:0003823">
    <property type="term" value="F:antigen binding"/>
    <property type="evidence" value="ECO:0000318"/>
    <property type="project" value="GO_Central"/>
</dbReference>
<dbReference type="GO" id="GO:0016064">
    <property type="term" value="P:immunoglobulin mediated immune response"/>
    <property type="evidence" value="ECO:0000318"/>
    <property type="project" value="GO_Central"/>
</dbReference>
<dbReference type="FunFam" id="2.60.40.10:FF:002487">
    <property type="entry name" value="Immunoglobulin heavy variable 13-2"/>
    <property type="match status" value="1"/>
</dbReference>
<dbReference type="Gene3D" id="2.60.40.10">
    <property type="entry name" value="Immunoglobulins"/>
    <property type="match status" value="1"/>
</dbReference>
<dbReference type="InterPro" id="IPR007110">
    <property type="entry name" value="Ig-like_dom"/>
</dbReference>
<dbReference type="InterPro" id="IPR036179">
    <property type="entry name" value="Ig-like_dom_sf"/>
</dbReference>
<dbReference type="InterPro" id="IPR013783">
    <property type="entry name" value="Ig-like_fold"/>
</dbReference>
<dbReference type="InterPro" id="IPR013106">
    <property type="entry name" value="Ig_V-set"/>
</dbReference>
<dbReference type="InterPro" id="IPR050199">
    <property type="entry name" value="IgHV"/>
</dbReference>
<dbReference type="PANTHER" id="PTHR23266">
    <property type="entry name" value="IMMUNOGLOBULIN HEAVY CHAIN"/>
    <property type="match status" value="1"/>
</dbReference>
<dbReference type="Pfam" id="PF07686">
    <property type="entry name" value="V-set"/>
    <property type="match status" value="1"/>
</dbReference>
<dbReference type="SMART" id="SM00406">
    <property type="entry name" value="IGv"/>
    <property type="match status" value="1"/>
</dbReference>
<dbReference type="SUPFAM" id="SSF48726">
    <property type="entry name" value="Immunoglobulin"/>
    <property type="match status" value="1"/>
</dbReference>
<dbReference type="PROSITE" id="PS50835">
    <property type="entry name" value="IG_LIKE"/>
    <property type="match status" value="1"/>
</dbReference>
<accession>A0A0B4J1U7</accession>
<comment type="function">
    <text evidence="5 6 7 8">V region of the variable domain of immunoglobulin heavy chains that participates in the antigen recognition (PubMed:24600447). Immunoglobulins, also known as antibodies, are membrane-bound or secreted glycoproteins produced by B lymphocytes. In the recognition phase of humoral immunity, the membrane-bound immunoglobulins serve as receptors which, upon binding of a specific antigen, trigger the clonal expansion and differentiation of B lymphocytes into immunoglobulins-secreting plasma cells. Secreted immunoglobulins mediate the effector phase of humoral immunity, which results in the elimination of bound antigens (PubMed:20176268, PubMed:22158414). The antigen binding site is formed by the variable domain of one heavy chain, together with that of its associated light chain. Thus, each immunoglobulin has two antigen binding sites with remarkable affinity for a particular antigen. The variable domains are assembled by a process called V-(D)-J rearrangement and can then be subjected to somatic hypermutations which, after exposure to antigen and selection, allow affinity maturation for a particular antigen (PubMed:17576170, PubMed:20176268).</text>
</comment>
<comment type="subunit">
    <text evidence="6">Immunoglobulins are composed of two identical heavy chains and two identical light chains; disulfide-linked.</text>
</comment>
<comment type="subcellular location">
    <subcellularLocation>
        <location evidence="6 7">Secreted</location>
    </subcellularLocation>
    <subcellularLocation>
        <location evidence="6 7">Cell membrane</location>
    </subcellularLocation>
</comment>
<comment type="polymorphism">
    <text evidence="10">There are several alleles. The sequence shown is that of IMGT allele IGHV6-1*01.</text>
</comment>
<comment type="caution">
    <text evidence="10">For examples of full-length immunoglobulin heavy chains (of different isotypes) see AC P0DOX2, AC P0DOX3, AC P0DOX4, AC P0DOX5 and AC P0DOX6.</text>
</comment>